<comment type="function">
    <text evidence="1">Catalyzes the irreversible transfer of a propylamine group from the amino donor S-adenosylmethioninamine (decarboxy-AdoMet) to putrescine (1,4-diaminobutane) to yield spermidine.</text>
</comment>
<comment type="catalytic activity">
    <reaction evidence="1">
        <text>S-adenosyl 3-(methylsulfanyl)propylamine + putrescine = S-methyl-5'-thioadenosine + spermidine + H(+)</text>
        <dbReference type="Rhea" id="RHEA:12721"/>
        <dbReference type="ChEBI" id="CHEBI:15378"/>
        <dbReference type="ChEBI" id="CHEBI:17509"/>
        <dbReference type="ChEBI" id="CHEBI:57443"/>
        <dbReference type="ChEBI" id="CHEBI:57834"/>
        <dbReference type="ChEBI" id="CHEBI:326268"/>
        <dbReference type="EC" id="2.5.1.16"/>
    </reaction>
</comment>
<comment type="pathway">
    <text evidence="1">Amine and polyamine biosynthesis; spermidine biosynthesis; spermidine from putrescine: step 1/1.</text>
</comment>
<comment type="subunit">
    <text evidence="1">Homodimer or homotetramer.</text>
</comment>
<comment type="subcellular location">
    <subcellularLocation>
        <location evidence="1">Cytoplasm</location>
    </subcellularLocation>
</comment>
<comment type="similarity">
    <text evidence="1">Belongs to the spermidine/spermine synthase family.</text>
</comment>
<evidence type="ECO:0000255" key="1">
    <source>
        <dbReference type="HAMAP-Rule" id="MF_00198"/>
    </source>
</evidence>
<protein>
    <recommendedName>
        <fullName evidence="1">Polyamine aminopropyltransferase 2</fullName>
    </recommendedName>
    <alternativeName>
        <fullName evidence="1">Putrescine aminopropyltransferase 2</fullName>
        <shortName evidence="1">PAPT 2</shortName>
    </alternativeName>
    <alternativeName>
        <fullName evidence="1">Spermidine synthase 2</fullName>
        <shortName evidence="1">SPDS 2</shortName>
        <shortName evidence="1">SPDSY 2</shortName>
        <ecNumber evidence="1">2.5.1.16</ecNumber>
    </alternativeName>
</protein>
<gene>
    <name evidence="1" type="primary">speE2</name>
    <name type="ordered locus">PA4774</name>
</gene>
<accession>Q9HV34</accession>
<sequence length="349" mass="39547">MPAEVAAGLPPLPPNHFYFYPPDPLLEGDGAITAIEDSDPFDQYVYRLRRVLYQGRTRWQNVLIADTYNYDRVLMLDGAIQSAESDESLYHELLVQPAMLAHDEPRDVLIIGGGEGATLREVLSHASVRRAVMVDLDRELVELCREHLFQWHQGAFDDPRCELLAEDGRAYLERDPSLYDVVIIDVVDMLDNGPAQALYTRQFYELLHSRLRPGGVVAVQGLEFSHSDDKPHAALARTLRSVFSQVHSYRATVPSFLSSWGFLLASDWLDTNHWQAEDIDRRIERKLGPLWLDHLDGDYLKACFVMDRETRFLLAQPGPVLEDGVPFVAPPDIEEIEFGPAQLPALART</sequence>
<proteinExistence type="inferred from homology"/>
<organism>
    <name type="scientific">Pseudomonas aeruginosa (strain ATCC 15692 / DSM 22644 / CIP 104116 / JCM 14847 / LMG 12228 / 1C / PRS 101 / PAO1)</name>
    <dbReference type="NCBI Taxonomy" id="208964"/>
    <lineage>
        <taxon>Bacteria</taxon>
        <taxon>Pseudomonadati</taxon>
        <taxon>Pseudomonadota</taxon>
        <taxon>Gammaproteobacteria</taxon>
        <taxon>Pseudomonadales</taxon>
        <taxon>Pseudomonadaceae</taxon>
        <taxon>Pseudomonas</taxon>
    </lineage>
</organism>
<feature type="chain" id="PRO_0000156498" description="Polyamine aminopropyltransferase 2">
    <location>
        <begin position="1"/>
        <end position="349"/>
    </location>
</feature>
<feature type="domain" description="PABS" evidence="1">
    <location>
        <begin position="29"/>
        <end position="267"/>
    </location>
</feature>
<feature type="active site" description="Proton acceptor" evidence="1">
    <location>
        <position position="185"/>
    </location>
</feature>
<feature type="binding site" evidence="1">
    <location>
        <position position="60"/>
    </location>
    <ligand>
        <name>S-methyl-5'-thioadenosine</name>
        <dbReference type="ChEBI" id="CHEBI:17509"/>
    </ligand>
</feature>
<feature type="binding site" evidence="1">
    <location>
        <position position="91"/>
    </location>
    <ligand>
        <name>spermidine</name>
        <dbReference type="ChEBI" id="CHEBI:57834"/>
    </ligand>
</feature>
<feature type="binding site" evidence="1">
    <location>
        <position position="115"/>
    </location>
    <ligand>
        <name>spermidine</name>
        <dbReference type="ChEBI" id="CHEBI:57834"/>
    </ligand>
</feature>
<feature type="binding site" evidence="1">
    <location>
        <position position="135"/>
    </location>
    <ligand>
        <name>S-methyl-5'-thioadenosine</name>
        <dbReference type="ChEBI" id="CHEBI:17509"/>
    </ligand>
</feature>
<feature type="binding site" evidence="1">
    <location>
        <begin position="167"/>
        <end position="168"/>
    </location>
    <ligand>
        <name>S-methyl-5'-thioadenosine</name>
        <dbReference type="ChEBI" id="CHEBI:17509"/>
    </ligand>
</feature>
<feature type="binding site" evidence="1">
    <location>
        <position position="194"/>
    </location>
    <ligand>
        <name>S-methyl-5'-thioadenosine</name>
        <dbReference type="ChEBI" id="CHEBI:17509"/>
    </ligand>
</feature>
<name>SPEE2_PSEAE</name>
<keyword id="KW-0963">Cytoplasm</keyword>
<keyword id="KW-0620">Polyamine biosynthesis</keyword>
<keyword id="KW-1185">Reference proteome</keyword>
<keyword id="KW-0745">Spermidine biosynthesis</keyword>
<keyword id="KW-0808">Transferase</keyword>
<dbReference type="EC" id="2.5.1.16" evidence="1"/>
<dbReference type="EMBL" id="AE004091">
    <property type="protein sequence ID" value="AAG08160.1"/>
    <property type="molecule type" value="Genomic_DNA"/>
</dbReference>
<dbReference type="PIR" id="D83048">
    <property type="entry name" value="D83048"/>
</dbReference>
<dbReference type="RefSeq" id="NP_253462.1">
    <property type="nucleotide sequence ID" value="NC_002516.2"/>
</dbReference>
<dbReference type="RefSeq" id="WP_003121084.1">
    <property type="nucleotide sequence ID" value="NC_002516.2"/>
</dbReference>
<dbReference type="SMR" id="Q9HV34"/>
<dbReference type="STRING" id="208964.PA4774"/>
<dbReference type="PaxDb" id="208964-PA4774"/>
<dbReference type="GeneID" id="881824"/>
<dbReference type="KEGG" id="pae:PA4774"/>
<dbReference type="PATRIC" id="fig|208964.12.peg.5001"/>
<dbReference type="PseudoCAP" id="PA4774"/>
<dbReference type="HOGENOM" id="CLU_048199_0_1_6"/>
<dbReference type="InParanoid" id="Q9HV34"/>
<dbReference type="OrthoDB" id="9793120at2"/>
<dbReference type="PhylomeDB" id="Q9HV34"/>
<dbReference type="BioCyc" id="PAER208964:G1FZ6-4887-MONOMER"/>
<dbReference type="UniPathway" id="UPA00248">
    <property type="reaction ID" value="UER00314"/>
</dbReference>
<dbReference type="Proteomes" id="UP000002438">
    <property type="component" value="Chromosome"/>
</dbReference>
<dbReference type="GO" id="GO:0005737">
    <property type="term" value="C:cytoplasm"/>
    <property type="evidence" value="ECO:0007669"/>
    <property type="project" value="UniProtKB-SubCell"/>
</dbReference>
<dbReference type="GO" id="GO:0004766">
    <property type="term" value="F:spermidine synthase activity"/>
    <property type="evidence" value="ECO:0007669"/>
    <property type="project" value="UniProtKB-UniRule"/>
</dbReference>
<dbReference type="GO" id="GO:0006596">
    <property type="term" value="P:polyamine biosynthetic process"/>
    <property type="evidence" value="ECO:0000318"/>
    <property type="project" value="GO_Central"/>
</dbReference>
<dbReference type="GO" id="GO:0008295">
    <property type="term" value="P:spermidine biosynthetic process"/>
    <property type="evidence" value="ECO:0000315"/>
    <property type="project" value="PseudoCAP"/>
</dbReference>
<dbReference type="CDD" id="cd02440">
    <property type="entry name" value="AdoMet_MTases"/>
    <property type="match status" value="1"/>
</dbReference>
<dbReference type="FunFam" id="3.40.50.150:FF:000088">
    <property type="entry name" value="Polyamine aminopropyltransferase"/>
    <property type="match status" value="1"/>
</dbReference>
<dbReference type="Gene3D" id="2.30.140.10">
    <property type="entry name" value="Spermidine synthase, tetramerisation domain"/>
    <property type="match status" value="1"/>
</dbReference>
<dbReference type="Gene3D" id="3.40.50.150">
    <property type="entry name" value="Vaccinia Virus protein VP39"/>
    <property type="match status" value="1"/>
</dbReference>
<dbReference type="HAMAP" id="MF_00198">
    <property type="entry name" value="Spermidine_synth"/>
    <property type="match status" value="1"/>
</dbReference>
<dbReference type="InterPro" id="IPR030374">
    <property type="entry name" value="PABS"/>
</dbReference>
<dbReference type="InterPro" id="IPR030373">
    <property type="entry name" value="PABS_CS"/>
</dbReference>
<dbReference type="InterPro" id="IPR029063">
    <property type="entry name" value="SAM-dependent_MTases_sf"/>
</dbReference>
<dbReference type="InterPro" id="IPR001045">
    <property type="entry name" value="Spermi_synthase"/>
</dbReference>
<dbReference type="InterPro" id="IPR035246">
    <property type="entry name" value="Spermidine_synt_N"/>
</dbReference>
<dbReference type="InterPro" id="IPR037163">
    <property type="entry name" value="Spermidine_synt_N_sf"/>
</dbReference>
<dbReference type="NCBIfam" id="NF037959">
    <property type="entry name" value="MFS_SpdSyn"/>
    <property type="match status" value="1"/>
</dbReference>
<dbReference type="PANTHER" id="PTHR43317:SF11">
    <property type="entry name" value="POLYAMINE AMINOPROPYLTRANSFERASE 2"/>
    <property type="match status" value="1"/>
</dbReference>
<dbReference type="PANTHER" id="PTHR43317">
    <property type="entry name" value="THERMOSPERMINE SYNTHASE ACAULIS5"/>
    <property type="match status" value="1"/>
</dbReference>
<dbReference type="Pfam" id="PF17284">
    <property type="entry name" value="Spermine_synt_N"/>
    <property type="match status" value="1"/>
</dbReference>
<dbReference type="Pfam" id="PF01564">
    <property type="entry name" value="Spermine_synth"/>
    <property type="match status" value="1"/>
</dbReference>
<dbReference type="SUPFAM" id="SSF53335">
    <property type="entry name" value="S-adenosyl-L-methionine-dependent methyltransferases"/>
    <property type="match status" value="1"/>
</dbReference>
<dbReference type="PROSITE" id="PS01330">
    <property type="entry name" value="PABS_1"/>
    <property type="match status" value="1"/>
</dbReference>
<dbReference type="PROSITE" id="PS51006">
    <property type="entry name" value="PABS_2"/>
    <property type="match status" value="1"/>
</dbReference>
<reference key="1">
    <citation type="journal article" date="2000" name="Nature">
        <title>Complete genome sequence of Pseudomonas aeruginosa PAO1, an opportunistic pathogen.</title>
        <authorList>
            <person name="Stover C.K."/>
            <person name="Pham X.-Q.T."/>
            <person name="Erwin A.L."/>
            <person name="Mizoguchi S.D."/>
            <person name="Warrener P."/>
            <person name="Hickey M.J."/>
            <person name="Brinkman F.S.L."/>
            <person name="Hufnagle W.O."/>
            <person name="Kowalik D.J."/>
            <person name="Lagrou M."/>
            <person name="Garber R.L."/>
            <person name="Goltry L."/>
            <person name="Tolentino E."/>
            <person name="Westbrock-Wadman S."/>
            <person name="Yuan Y."/>
            <person name="Brody L.L."/>
            <person name="Coulter S.N."/>
            <person name="Folger K.R."/>
            <person name="Kas A."/>
            <person name="Larbig K."/>
            <person name="Lim R.M."/>
            <person name="Smith K.A."/>
            <person name="Spencer D.H."/>
            <person name="Wong G.K.-S."/>
            <person name="Wu Z."/>
            <person name="Paulsen I.T."/>
            <person name="Reizer J."/>
            <person name="Saier M.H. Jr."/>
            <person name="Hancock R.E.W."/>
            <person name="Lory S."/>
            <person name="Olson M.V."/>
        </authorList>
    </citation>
    <scope>NUCLEOTIDE SEQUENCE [LARGE SCALE GENOMIC DNA]</scope>
    <source>
        <strain>ATCC 15692 / DSM 22644 / CIP 104116 / JCM 14847 / LMG 12228 / 1C / PRS 101 / PAO1</strain>
    </source>
</reference>